<feature type="chain" id="PRO_0000224397" description="DNA mismatch repair protein MutS">
    <location>
        <begin position="1"/>
        <end position="894"/>
    </location>
</feature>
<feature type="region of interest" description="Disordered" evidence="2">
    <location>
        <begin position="819"/>
        <end position="840"/>
    </location>
</feature>
<feature type="binding site" evidence="1">
    <location>
        <begin position="629"/>
        <end position="636"/>
    </location>
    <ligand>
        <name>ATP</name>
        <dbReference type="ChEBI" id="CHEBI:30616"/>
    </ligand>
</feature>
<organism>
    <name type="scientific">Cupriavidus pinatubonensis (strain JMP 134 / LMG 1197)</name>
    <name type="common">Cupriavidus necator (strain JMP 134)</name>
    <dbReference type="NCBI Taxonomy" id="264198"/>
    <lineage>
        <taxon>Bacteria</taxon>
        <taxon>Pseudomonadati</taxon>
        <taxon>Pseudomonadota</taxon>
        <taxon>Betaproteobacteria</taxon>
        <taxon>Burkholderiales</taxon>
        <taxon>Burkholderiaceae</taxon>
        <taxon>Cupriavidus</taxon>
    </lineage>
</organism>
<gene>
    <name evidence="1" type="primary">mutS</name>
    <name type="ordered locus">Reut_A1111</name>
</gene>
<evidence type="ECO:0000255" key="1">
    <source>
        <dbReference type="HAMAP-Rule" id="MF_00096"/>
    </source>
</evidence>
<evidence type="ECO:0000256" key="2">
    <source>
        <dbReference type="SAM" id="MobiDB-lite"/>
    </source>
</evidence>
<evidence type="ECO:0000305" key="3"/>
<proteinExistence type="inferred from homology"/>
<accession>Q473E4</accession>
<keyword id="KW-0067">ATP-binding</keyword>
<keyword id="KW-0227">DNA damage</keyword>
<keyword id="KW-0234">DNA repair</keyword>
<keyword id="KW-0238">DNA-binding</keyword>
<keyword id="KW-0547">Nucleotide-binding</keyword>
<dbReference type="EMBL" id="CP000090">
    <property type="protein sequence ID" value="AAZ60489.1"/>
    <property type="status" value="ALT_INIT"/>
    <property type="molecule type" value="Genomic_DNA"/>
</dbReference>
<dbReference type="SMR" id="Q473E4"/>
<dbReference type="STRING" id="264198.Reut_A1111"/>
<dbReference type="KEGG" id="reu:Reut_A1111"/>
<dbReference type="eggNOG" id="COG0249">
    <property type="taxonomic scope" value="Bacteria"/>
</dbReference>
<dbReference type="HOGENOM" id="CLU_002472_4_0_4"/>
<dbReference type="OrthoDB" id="9802448at2"/>
<dbReference type="GO" id="GO:0005829">
    <property type="term" value="C:cytosol"/>
    <property type="evidence" value="ECO:0007669"/>
    <property type="project" value="TreeGrafter"/>
</dbReference>
<dbReference type="GO" id="GO:0005524">
    <property type="term" value="F:ATP binding"/>
    <property type="evidence" value="ECO:0007669"/>
    <property type="project" value="UniProtKB-UniRule"/>
</dbReference>
<dbReference type="GO" id="GO:0140664">
    <property type="term" value="F:ATP-dependent DNA damage sensor activity"/>
    <property type="evidence" value="ECO:0007669"/>
    <property type="project" value="InterPro"/>
</dbReference>
<dbReference type="GO" id="GO:0003684">
    <property type="term" value="F:damaged DNA binding"/>
    <property type="evidence" value="ECO:0007669"/>
    <property type="project" value="UniProtKB-UniRule"/>
</dbReference>
<dbReference type="GO" id="GO:0030983">
    <property type="term" value="F:mismatched DNA binding"/>
    <property type="evidence" value="ECO:0007669"/>
    <property type="project" value="InterPro"/>
</dbReference>
<dbReference type="GO" id="GO:0006298">
    <property type="term" value="P:mismatch repair"/>
    <property type="evidence" value="ECO:0007669"/>
    <property type="project" value="UniProtKB-UniRule"/>
</dbReference>
<dbReference type="CDD" id="cd03284">
    <property type="entry name" value="ABC_MutS1"/>
    <property type="match status" value="1"/>
</dbReference>
<dbReference type="FunFam" id="1.10.1420.10:FF:000001">
    <property type="entry name" value="DNA mismatch repair protein MutS"/>
    <property type="match status" value="1"/>
</dbReference>
<dbReference type="FunFam" id="3.40.1170.10:FF:000001">
    <property type="entry name" value="DNA mismatch repair protein MutS"/>
    <property type="match status" value="1"/>
</dbReference>
<dbReference type="Gene3D" id="1.10.1420.10">
    <property type="match status" value="2"/>
</dbReference>
<dbReference type="Gene3D" id="6.10.140.430">
    <property type="match status" value="1"/>
</dbReference>
<dbReference type="Gene3D" id="3.40.1170.10">
    <property type="entry name" value="DNA repair protein MutS, domain I"/>
    <property type="match status" value="1"/>
</dbReference>
<dbReference type="Gene3D" id="3.30.420.110">
    <property type="entry name" value="MutS, connector domain"/>
    <property type="match status" value="1"/>
</dbReference>
<dbReference type="Gene3D" id="3.40.50.300">
    <property type="entry name" value="P-loop containing nucleotide triphosphate hydrolases"/>
    <property type="match status" value="1"/>
</dbReference>
<dbReference type="HAMAP" id="MF_00096">
    <property type="entry name" value="MutS"/>
    <property type="match status" value="1"/>
</dbReference>
<dbReference type="InterPro" id="IPR005748">
    <property type="entry name" value="DNA_mismatch_repair_MutS"/>
</dbReference>
<dbReference type="InterPro" id="IPR007695">
    <property type="entry name" value="DNA_mismatch_repair_MutS-lik_N"/>
</dbReference>
<dbReference type="InterPro" id="IPR017261">
    <property type="entry name" value="DNA_mismatch_repair_MutS/MSH"/>
</dbReference>
<dbReference type="InterPro" id="IPR000432">
    <property type="entry name" value="DNA_mismatch_repair_MutS_C"/>
</dbReference>
<dbReference type="InterPro" id="IPR007861">
    <property type="entry name" value="DNA_mismatch_repair_MutS_clamp"/>
</dbReference>
<dbReference type="InterPro" id="IPR007696">
    <property type="entry name" value="DNA_mismatch_repair_MutS_core"/>
</dbReference>
<dbReference type="InterPro" id="IPR016151">
    <property type="entry name" value="DNA_mismatch_repair_MutS_N"/>
</dbReference>
<dbReference type="InterPro" id="IPR036187">
    <property type="entry name" value="DNA_mismatch_repair_MutS_sf"/>
</dbReference>
<dbReference type="InterPro" id="IPR007860">
    <property type="entry name" value="DNA_mmatch_repair_MutS_con_dom"/>
</dbReference>
<dbReference type="InterPro" id="IPR045076">
    <property type="entry name" value="MutS"/>
</dbReference>
<dbReference type="InterPro" id="IPR036678">
    <property type="entry name" value="MutS_con_dom_sf"/>
</dbReference>
<dbReference type="InterPro" id="IPR027417">
    <property type="entry name" value="P-loop_NTPase"/>
</dbReference>
<dbReference type="NCBIfam" id="TIGR01070">
    <property type="entry name" value="mutS1"/>
    <property type="match status" value="1"/>
</dbReference>
<dbReference type="NCBIfam" id="NF003810">
    <property type="entry name" value="PRK05399.1"/>
    <property type="match status" value="1"/>
</dbReference>
<dbReference type="PANTHER" id="PTHR11361:SF34">
    <property type="entry name" value="DNA MISMATCH REPAIR PROTEIN MSH1, MITOCHONDRIAL"/>
    <property type="match status" value="1"/>
</dbReference>
<dbReference type="PANTHER" id="PTHR11361">
    <property type="entry name" value="DNA MISMATCH REPAIR PROTEIN MUTS FAMILY MEMBER"/>
    <property type="match status" value="1"/>
</dbReference>
<dbReference type="Pfam" id="PF01624">
    <property type="entry name" value="MutS_I"/>
    <property type="match status" value="1"/>
</dbReference>
<dbReference type="Pfam" id="PF05188">
    <property type="entry name" value="MutS_II"/>
    <property type="match status" value="1"/>
</dbReference>
<dbReference type="Pfam" id="PF05192">
    <property type="entry name" value="MutS_III"/>
    <property type="match status" value="1"/>
</dbReference>
<dbReference type="Pfam" id="PF05190">
    <property type="entry name" value="MutS_IV"/>
    <property type="match status" value="1"/>
</dbReference>
<dbReference type="Pfam" id="PF00488">
    <property type="entry name" value="MutS_V"/>
    <property type="match status" value="1"/>
</dbReference>
<dbReference type="PIRSF" id="PIRSF037677">
    <property type="entry name" value="DNA_mis_repair_Msh6"/>
    <property type="match status" value="1"/>
</dbReference>
<dbReference type="SMART" id="SM00534">
    <property type="entry name" value="MUTSac"/>
    <property type="match status" value="1"/>
</dbReference>
<dbReference type="SMART" id="SM00533">
    <property type="entry name" value="MUTSd"/>
    <property type="match status" value="1"/>
</dbReference>
<dbReference type="SUPFAM" id="SSF55271">
    <property type="entry name" value="DNA repair protein MutS, domain I"/>
    <property type="match status" value="1"/>
</dbReference>
<dbReference type="SUPFAM" id="SSF53150">
    <property type="entry name" value="DNA repair protein MutS, domain II"/>
    <property type="match status" value="1"/>
</dbReference>
<dbReference type="SUPFAM" id="SSF48334">
    <property type="entry name" value="DNA repair protein MutS, domain III"/>
    <property type="match status" value="1"/>
</dbReference>
<dbReference type="SUPFAM" id="SSF52540">
    <property type="entry name" value="P-loop containing nucleoside triphosphate hydrolases"/>
    <property type="match status" value="1"/>
</dbReference>
<dbReference type="PROSITE" id="PS00486">
    <property type="entry name" value="DNA_MISMATCH_REPAIR_2"/>
    <property type="match status" value="1"/>
</dbReference>
<reference key="1">
    <citation type="journal article" date="2010" name="PLoS ONE">
        <title>The complete multipartite genome sequence of Cupriavidus necator JMP134, a versatile pollutant degrader.</title>
        <authorList>
            <person name="Lykidis A."/>
            <person name="Perez-Pantoja D."/>
            <person name="Ledger T."/>
            <person name="Mavromatis K."/>
            <person name="Anderson I.J."/>
            <person name="Ivanova N.N."/>
            <person name="Hooper S.D."/>
            <person name="Lapidus A."/>
            <person name="Lucas S."/>
            <person name="Gonzalez B."/>
            <person name="Kyrpides N.C."/>
        </authorList>
    </citation>
    <scope>NUCLEOTIDE SEQUENCE [LARGE SCALE GENOMIC DNA]</scope>
    <source>
        <strain>JMP134 / LMG 1197</strain>
    </source>
</reference>
<protein>
    <recommendedName>
        <fullName evidence="1">DNA mismatch repair protein MutS</fullName>
    </recommendedName>
</protein>
<name>MUTS_CUPPJ</name>
<comment type="function">
    <text evidence="1">This protein is involved in the repair of mismatches in DNA. It is possible that it carries out the mismatch recognition step. This protein has a weak ATPase activity.</text>
</comment>
<comment type="similarity">
    <text evidence="1">Belongs to the DNA mismatch repair MutS family.</text>
</comment>
<comment type="sequence caution" evidence="3">
    <conflict type="erroneous initiation">
        <sequence resource="EMBL-CDS" id="AAZ60489"/>
    </conflict>
</comment>
<sequence>MQEKIELNQEVAKPLAEKHTPMMQQYLRIKADHPDTLLFYRMGDFYELFHDDAEKAARLLDITLTARGSSNGVPIRMAGIPFHSADQYLAKLVKLGESVAICEQIGDPAASKGPVERKVVRIVTPGTLTDASLLPDKSDTFLMAVHQQTTRRGVSKTGLAWLNLASGELRLMECEAAQLAREFERIRPAELLYADGIDLPAVACARTRLPEWHFDQDAGTRRLLEQLGVASLEPFGCAGLGAAIGAAGALLNYAATTQGQSLRHVRDIKVERESEFVGLDSATRRNLELTETLRGGESPTLFSLLDTCATAMGSRALRHWLHHPLRDPALPRARQQAIGVLIDHGIDDLRSALRKLADVERITSRLALLSARPRDLSSLRDTLRALPHVRACLQAEPDSSLLSLTVAELAVPQACLDLLISAVAEEPATVVRDGGVIARGYDAELDELRDISENCGQFLVDLESRERTRTGIANLRVEYNRVHGFYIEVTNGQADKVPDDYRRRQTLKNAERYITPELKAFEDKALSAQDRALAREKQLYDVLLQALLPHIGELQRVAGALARLDVLASLAERAQTLDWSCPERVGDNVIDIVQGRHPVVEGQLAAESVPFIANDCQLNEARKLLLITGPNMGGKSTFMRQTALIVLLACVGAYVPARRAVIGPVDRIFTRIGAADDLAGGRSTFMVEMTEAAAILHHATPASLVLMDEIGRGTSTFDGLALAWAIARHLLSHNRSHTLFATHYFELTQLPQEFPQAANVHLSAVEHGDGIVFLHAVQDGPASQSYGLQVAQLAGVPQPVIRAARKHLAWLEQQSADATPTPQLDLFAPPPHPDTSDDDEPVSIGKPVQVALLPEQAAVLDALSDLDPDSLTPRAALDALYRLKVLAGEVVDAA</sequence>